<feature type="chain" id="PRO_1000165563" description="Small ribosomal subunit protein uS11">
    <location>
        <begin position="1"/>
        <end position="137"/>
    </location>
</feature>
<feature type="region of interest" description="Disordered" evidence="2">
    <location>
        <begin position="1"/>
        <end position="28"/>
    </location>
</feature>
<feature type="region of interest" description="Disordered" evidence="2">
    <location>
        <begin position="117"/>
        <end position="137"/>
    </location>
</feature>
<feature type="compositionally biased region" description="Polar residues" evidence="2">
    <location>
        <begin position="1"/>
        <end position="11"/>
    </location>
</feature>
<feature type="compositionally biased region" description="Basic residues" evidence="2">
    <location>
        <begin position="12"/>
        <end position="21"/>
    </location>
</feature>
<comment type="function">
    <text evidence="1">Located on the platform of the 30S subunit, it bridges several disparate RNA helices of the 16S rRNA. Forms part of the Shine-Dalgarno cleft in the 70S ribosome.</text>
</comment>
<comment type="subunit">
    <text evidence="1">Part of the 30S ribosomal subunit. Interacts with proteins S7 and S18. Binds to IF-3.</text>
</comment>
<comment type="similarity">
    <text evidence="1">Belongs to the universal ribosomal protein uS11 family.</text>
</comment>
<keyword id="KW-0687">Ribonucleoprotein</keyword>
<keyword id="KW-0689">Ribosomal protein</keyword>
<keyword id="KW-0694">RNA-binding</keyword>
<keyword id="KW-0699">rRNA-binding</keyword>
<accession>C1B039</accession>
<gene>
    <name evidence="1" type="primary">rpsK</name>
    <name type="ordered locus">ROP_62130</name>
</gene>
<proteinExistence type="inferred from homology"/>
<protein>
    <recommendedName>
        <fullName evidence="1">Small ribosomal subunit protein uS11</fullName>
    </recommendedName>
    <alternativeName>
        <fullName evidence="3">30S ribosomal protein S11</fullName>
    </alternativeName>
</protein>
<reference key="1">
    <citation type="submission" date="2009-03" db="EMBL/GenBank/DDBJ databases">
        <title>Comparison of the complete genome sequences of Rhodococcus erythropolis PR4 and Rhodococcus opacus B4.</title>
        <authorList>
            <person name="Takarada H."/>
            <person name="Sekine M."/>
            <person name="Hosoyama A."/>
            <person name="Yamada R."/>
            <person name="Fujisawa T."/>
            <person name="Omata S."/>
            <person name="Shimizu A."/>
            <person name="Tsukatani N."/>
            <person name="Tanikawa S."/>
            <person name="Fujita N."/>
            <person name="Harayama S."/>
        </authorList>
    </citation>
    <scope>NUCLEOTIDE SEQUENCE [LARGE SCALE GENOMIC DNA]</scope>
    <source>
        <strain>B4</strain>
    </source>
</reference>
<sequence>MPPKSRSTGPKKTQKARRRDKKNVPHGAAHIKSTFNNTIVSITDPAGNVISWASSGHVGFKGSRKSTPFAAQLAAENAARKAQEHGVKKVDVFVKGPGSGRETAIRSLQAAGLEVGTISDVTPQPHNGCRPPKRRRV</sequence>
<dbReference type="EMBL" id="AP011115">
    <property type="protein sequence ID" value="BAH54460.1"/>
    <property type="molecule type" value="Genomic_DNA"/>
</dbReference>
<dbReference type="RefSeq" id="WP_005239680.1">
    <property type="nucleotide sequence ID" value="NC_012522.1"/>
</dbReference>
<dbReference type="SMR" id="C1B039"/>
<dbReference type="STRING" id="632772.ROP_62130"/>
<dbReference type="GeneID" id="69890543"/>
<dbReference type="KEGG" id="rop:ROP_62130"/>
<dbReference type="PATRIC" id="fig|632772.20.peg.6489"/>
<dbReference type="HOGENOM" id="CLU_072439_5_0_11"/>
<dbReference type="OrthoDB" id="9806415at2"/>
<dbReference type="Proteomes" id="UP000002212">
    <property type="component" value="Chromosome"/>
</dbReference>
<dbReference type="GO" id="GO:1990904">
    <property type="term" value="C:ribonucleoprotein complex"/>
    <property type="evidence" value="ECO:0007669"/>
    <property type="project" value="UniProtKB-KW"/>
</dbReference>
<dbReference type="GO" id="GO:0005840">
    <property type="term" value="C:ribosome"/>
    <property type="evidence" value="ECO:0007669"/>
    <property type="project" value="UniProtKB-KW"/>
</dbReference>
<dbReference type="GO" id="GO:0019843">
    <property type="term" value="F:rRNA binding"/>
    <property type="evidence" value="ECO:0007669"/>
    <property type="project" value="UniProtKB-UniRule"/>
</dbReference>
<dbReference type="GO" id="GO:0003735">
    <property type="term" value="F:structural constituent of ribosome"/>
    <property type="evidence" value="ECO:0007669"/>
    <property type="project" value="InterPro"/>
</dbReference>
<dbReference type="GO" id="GO:0006412">
    <property type="term" value="P:translation"/>
    <property type="evidence" value="ECO:0007669"/>
    <property type="project" value="UniProtKB-UniRule"/>
</dbReference>
<dbReference type="FunFam" id="3.30.420.80:FF:000001">
    <property type="entry name" value="30S ribosomal protein S11"/>
    <property type="match status" value="1"/>
</dbReference>
<dbReference type="Gene3D" id="3.30.420.80">
    <property type="entry name" value="Ribosomal protein S11"/>
    <property type="match status" value="1"/>
</dbReference>
<dbReference type="HAMAP" id="MF_01310">
    <property type="entry name" value="Ribosomal_uS11"/>
    <property type="match status" value="1"/>
</dbReference>
<dbReference type="InterPro" id="IPR001971">
    <property type="entry name" value="Ribosomal_uS11"/>
</dbReference>
<dbReference type="InterPro" id="IPR019981">
    <property type="entry name" value="Ribosomal_uS11_bac-type"/>
</dbReference>
<dbReference type="InterPro" id="IPR018102">
    <property type="entry name" value="Ribosomal_uS11_CS"/>
</dbReference>
<dbReference type="InterPro" id="IPR036967">
    <property type="entry name" value="Ribosomal_uS11_sf"/>
</dbReference>
<dbReference type="NCBIfam" id="NF003698">
    <property type="entry name" value="PRK05309.1"/>
    <property type="match status" value="1"/>
</dbReference>
<dbReference type="NCBIfam" id="TIGR03632">
    <property type="entry name" value="uS11_bact"/>
    <property type="match status" value="1"/>
</dbReference>
<dbReference type="PANTHER" id="PTHR11759">
    <property type="entry name" value="40S RIBOSOMAL PROTEIN S14/30S RIBOSOMAL PROTEIN S11"/>
    <property type="match status" value="1"/>
</dbReference>
<dbReference type="Pfam" id="PF00411">
    <property type="entry name" value="Ribosomal_S11"/>
    <property type="match status" value="1"/>
</dbReference>
<dbReference type="PIRSF" id="PIRSF002131">
    <property type="entry name" value="Ribosomal_S11"/>
    <property type="match status" value="1"/>
</dbReference>
<dbReference type="SUPFAM" id="SSF53137">
    <property type="entry name" value="Translational machinery components"/>
    <property type="match status" value="1"/>
</dbReference>
<dbReference type="PROSITE" id="PS00054">
    <property type="entry name" value="RIBOSOMAL_S11"/>
    <property type="match status" value="1"/>
</dbReference>
<organism>
    <name type="scientific">Rhodococcus opacus (strain B4)</name>
    <dbReference type="NCBI Taxonomy" id="632772"/>
    <lineage>
        <taxon>Bacteria</taxon>
        <taxon>Bacillati</taxon>
        <taxon>Actinomycetota</taxon>
        <taxon>Actinomycetes</taxon>
        <taxon>Mycobacteriales</taxon>
        <taxon>Nocardiaceae</taxon>
        <taxon>Rhodococcus</taxon>
    </lineage>
</organism>
<evidence type="ECO:0000255" key="1">
    <source>
        <dbReference type="HAMAP-Rule" id="MF_01310"/>
    </source>
</evidence>
<evidence type="ECO:0000256" key="2">
    <source>
        <dbReference type="SAM" id="MobiDB-lite"/>
    </source>
</evidence>
<evidence type="ECO:0000305" key="3"/>
<name>RS11_RHOOB</name>